<feature type="chain" id="PRO_0000097215" description="Meiotic recombination protein REC104">
    <location>
        <begin position="1"/>
        <end position="185"/>
    </location>
</feature>
<feature type="region of interest" description="Disordered" evidence="2">
    <location>
        <begin position="146"/>
        <end position="168"/>
    </location>
</feature>
<accession>Q92379</accession>
<gene>
    <name type="primary">REC104</name>
</gene>
<name>RE104_SACPS</name>
<organism>
    <name type="scientific">Saccharomyces pastorianus</name>
    <name type="common">Lager yeast</name>
    <name type="synonym">Saccharomyces cerevisiae x Saccharomyces eubayanus</name>
    <dbReference type="NCBI Taxonomy" id="27292"/>
    <lineage>
        <taxon>Eukaryota</taxon>
        <taxon>Fungi</taxon>
        <taxon>Dikarya</taxon>
        <taxon>Ascomycota</taxon>
        <taxon>Saccharomycotina</taxon>
        <taxon>Saccharomycetes</taxon>
        <taxon>Saccharomycetales</taxon>
        <taxon>Saccharomycetaceae</taxon>
        <taxon>Saccharomyces</taxon>
    </lineage>
</organism>
<evidence type="ECO:0000250" key="1"/>
<evidence type="ECO:0000256" key="2">
    <source>
        <dbReference type="SAM" id="MobiDB-lite"/>
    </source>
</evidence>
<proteinExistence type="evidence at transcript level"/>
<sequence>MSTNKEEEHQIVCTQDFLRQYYVSESVSIQFGLNNKTIRTINEEEFNNAAMCIMTRTNYPESTLKRSASTYLLNSYHKKPATLSLPFVFGDTINLSEDMEDNNENNLLYSDTLYGDDSLTQRGDQVVYKIDTQEEDSSFTLLQSEANETRPLSSSSTPQILQSDYSVVMQEGQTSNGSIFQFSSP</sequence>
<dbReference type="EMBL" id="U66720">
    <property type="protein sequence ID" value="AAB41529.1"/>
    <property type="molecule type" value="Genomic_DNA"/>
</dbReference>
<dbReference type="SMR" id="Q92379"/>
<dbReference type="OrthoDB" id="4045971at2759"/>
<dbReference type="GO" id="GO:0042138">
    <property type="term" value="P:meiotic DNA double-strand break formation"/>
    <property type="evidence" value="ECO:0007669"/>
    <property type="project" value="InterPro"/>
</dbReference>
<dbReference type="InterPro" id="IPR035349">
    <property type="entry name" value="Rec104"/>
</dbReference>
<dbReference type="Pfam" id="PF17378">
    <property type="entry name" value="REC104"/>
    <property type="match status" value="1"/>
</dbReference>
<keyword id="KW-0010">Activator</keyword>
<keyword id="KW-0469">Meiosis</keyword>
<keyword id="KW-0804">Transcription</keyword>
<keyword id="KW-0805">Transcription regulation</keyword>
<comment type="function">
    <text evidence="1">Potential transcriptional regulator that is required to activate expression of a number of early meiotic genes including HOP1.</text>
</comment>
<comment type="developmental stage">
    <text>Meiosis-specific.</text>
</comment>
<protein>
    <recommendedName>
        <fullName>Meiotic recombination protein REC104</fullName>
    </recommendedName>
</protein>
<reference key="1">
    <citation type="journal article" date="1997" name="Curr. Genet.">
        <title>Isolation of early meiotic recombination genes analogous to S. cerevisiae REC104 from the yeasts S. paradoxus and S. pastorianus.</title>
        <authorList>
            <person name="Nau J.J."/>
            <person name="Summers K.R."/>
            <person name="Galbraith A.M."/>
            <person name="Bullard S.A."/>
            <person name="Malone R.E."/>
        </authorList>
    </citation>
    <scope>NUCLEOTIDE SEQUENCE [GENOMIC DNA]</scope>
    <source>
        <strain>DBVPG 6258 / CBS 1486</strain>
    </source>
</reference>